<comment type="function">
    <text evidence="1">May play a role in DNA repair. It seems to be involved in an RecBC-independent recombinational process of DNA repair. It may act with RecF and RecO.</text>
</comment>
<comment type="similarity">
    <text evidence="1">Belongs to the RecR family.</text>
</comment>
<dbReference type="EMBL" id="CP000703">
    <property type="protein sequence ID" value="ABQ48305.1"/>
    <property type="molecule type" value="Genomic_DNA"/>
</dbReference>
<dbReference type="RefSeq" id="WP_000559159.1">
    <property type="nucleotide sequence ID" value="NC_009487.1"/>
</dbReference>
<dbReference type="SMR" id="A5IQ32"/>
<dbReference type="KEGG" id="saj:SaurJH9_0501"/>
<dbReference type="HOGENOM" id="CLU_060739_1_0_9"/>
<dbReference type="GO" id="GO:0003677">
    <property type="term" value="F:DNA binding"/>
    <property type="evidence" value="ECO:0007669"/>
    <property type="project" value="UniProtKB-UniRule"/>
</dbReference>
<dbReference type="GO" id="GO:0008270">
    <property type="term" value="F:zinc ion binding"/>
    <property type="evidence" value="ECO:0007669"/>
    <property type="project" value="UniProtKB-KW"/>
</dbReference>
<dbReference type="GO" id="GO:0006310">
    <property type="term" value="P:DNA recombination"/>
    <property type="evidence" value="ECO:0007669"/>
    <property type="project" value="UniProtKB-UniRule"/>
</dbReference>
<dbReference type="GO" id="GO:0006281">
    <property type="term" value="P:DNA repair"/>
    <property type="evidence" value="ECO:0007669"/>
    <property type="project" value="UniProtKB-UniRule"/>
</dbReference>
<dbReference type="CDD" id="cd01025">
    <property type="entry name" value="TOPRIM_recR"/>
    <property type="match status" value="1"/>
</dbReference>
<dbReference type="Gene3D" id="3.30.60.80">
    <property type="match status" value="1"/>
</dbReference>
<dbReference type="Gene3D" id="3.40.1360.10">
    <property type="match status" value="1"/>
</dbReference>
<dbReference type="Gene3D" id="6.10.250.240">
    <property type="match status" value="1"/>
</dbReference>
<dbReference type="Gene3D" id="1.10.8.420">
    <property type="entry name" value="RecR Domain 1"/>
    <property type="match status" value="1"/>
</dbReference>
<dbReference type="HAMAP" id="MF_00017">
    <property type="entry name" value="RecR"/>
    <property type="match status" value="1"/>
</dbReference>
<dbReference type="InterPro" id="IPR000093">
    <property type="entry name" value="DNA_Rcmb_RecR"/>
</dbReference>
<dbReference type="InterPro" id="IPR003583">
    <property type="entry name" value="Hlx-hairpin-Hlx_DNA-bd_motif"/>
</dbReference>
<dbReference type="InterPro" id="IPR023627">
    <property type="entry name" value="Rcmb_RecR"/>
</dbReference>
<dbReference type="InterPro" id="IPR015967">
    <property type="entry name" value="Rcmb_RecR_Znf"/>
</dbReference>
<dbReference type="InterPro" id="IPR006171">
    <property type="entry name" value="TOPRIM_dom"/>
</dbReference>
<dbReference type="InterPro" id="IPR034137">
    <property type="entry name" value="TOPRIM_RecR"/>
</dbReference>
<dbReference type="NCBIfam" id="TIGR00615">
    <property type="entry name" value="recR"/>
    <property type="match status" value="1"/>
</dbReference>
<dbReference type="PANTHER" id="PTHR30446">
    <property type="entry name" value="RECOMBINATION PROTEIN RECR"/>
    <property type="match status" value="1"/>
</dbReference>
<dbReference type="PANTHER" id="PTHR30446:SF0">
    <property type="entry name" value="RECOMBINATION PROTEIN RECR"/>
    <property type="match status" value="1"/>
</dbReference>
<dbReference type="Pfam" id="PF21175">
    <property type="entry name" value="RecR_C"/>
    <property type="match status" value="1"/>
</dbReference>
<dbReference type="Pfam" id="PF21176">
    <property type="entry name" value="RecR_HhH"/>
    <property type="match status" value="1"/>
</dbReference>
<dbReference type="Pfam" id="PF02132">
    <property type="entry name" value="RecR_ZnF"/>
    <property type="match status" value="1"/>
</dbReference>
<dbReference type="Pfam" id="PF13662">
    <property type="entry name" value="Toprim_4"/>
    <property type="match status" value="1"/>
</dbReference>
<dbReference type="SMART" id="SM00278">
    <property type="entry name" value="HhH1"/>
    <property type="match status" value="1"/>
</dbReference>
<dbReference type="SMART" id="SM00493">
    <property type="entry name" value="TOPRIM"/>
    <property type="match status" value="1"/>
</dbReference>
<dbReference type="SUPFAM" id="SSF111304">
    <property type="entry name" value="Recombination protein RecR"/>
    <property type="match status" value="1"/>
</dbReference>
<dbReference type="PROSITE" id="PS01300">
    <property type="entry name" value="RECR"/>
    <property type="match status" value="1"/>
</dbReference>
<dbReference type="PROSITE" id="PS50880">
    <property type="entry name" value="TOPRIM"/>
    <property type="match status" value="1"/>
</dbReference>
<protein>
    <recommendedName>
        <fullName evidence="1">Recombination protein RecR</fullName>
    </recommendedName>
</protein>
<keyword id="KW-0227">DNA damage</keyword>
<keyword id="KW-0233">DNA recombination</keyword>
<keyword id="KW-0234">DNA repair</keyword>
<keyword id="KW-0479">Metal-binding</keyword>
<keyword id="KW-0862">Zinc</keyword>
<keyword id="KW-0863">Zinc-finger</keyword>
<organism>
    <name type="scientific">Staphylococcus aureus (strain JH9)</name>
    <dbReference type="NCBI Taxonomy" id="359786"/>
    <lineage>
        <taxon>Bacteria</taxon>
        <taxon>Bacillati</taxon>
        <taxon>Bacillota</taxon>
        <taxon>Bacilli</taxon>
        <taxon>Bacillales</taxon>
        <taxon>Staphylococcaceae</taxon>
        <taxon>Staphylococcus</taxon>
    </lineage>
</organism>
<gene>
    <name evidence="1" type="primary">recR</name>
    <name type="ordered locus">SaurJH9_0501</name>
</gene>
<name>RECR_STAA9</name>
<evidence type="ECO:0000255" key="1">
    <source>
        <dbReference type="HAMAP-Rule" id="MF_00017"/>
    </source>
</evidence>
<sequence length="198" mass="22072">MHYPEPISKLIDSFMKLPGIGPKTAQRLAFHTLDMKEDDVVQFAKALVDVKRELTYCSVCGHITENDPCYICEDKQRDRSVICVVEDDKDVIAMEKMREYKGLYHVLHGSISPMDGIGPEDINIPSLIERLKSDEVSELILAMNPNLEGESTAMYISRLVKPIGIKVTRLAQGLSVGGDLEYADEVTLSKAIAGRTEM</sequence>
<accession>A5IQ32</accession>
<reference key="1">
    <citation type="submission" date="2007-05" db="EMBL/GenBank/DDBJ databases">
        <title>Complete sequence of chromosome of Staphylococcus aureus subsp. aureus JH9.</title>
        <authorList>
            <consortium name="US DOE Joint Genome Institute"/>
            <person name="Copeland A."/>
            <person name="Lucas S."/>
            <person name="Lapidus A."/>
            <person name="Barry K."/>
            <person name="Detter J.C."/>
            <person name="Glavina del Rio T."/>
            <person name="Hammon N."/>
            <person name="Israni S."/>
            <person name="Pitluck S."/>
            <person name="Chain P."/>
            <person name="Malfatti S."/>
            <person name="Shin M."/>
            <person name="Vergez L."/>
            <person name="Schmutz J."/>
            <person name="Larimer F."/>
            <person name="Land M."/>
            <person name="Hauser L."/>
            <person name="Kyrpides N."/>
            <person name="Kim E."/>
            <person name="Tomasz A."/>
            <person name="Richardson P."/>
        </authorList>
    </citation>
    <scope>NUCLEOTIDE SEQUENCE [LARGE SCALE GENOMIC DNA]</scope>
    <source>
        <strain>JH9</strain>
    </source>
</reference>
<proteinExistence type="inferred from homology"/>
<feature type="chain" id="PRO_1000074136" description="Recombination protein RecR">
    <location>
        <begin position="1"/>
        <end position="198"/>
    </location>
</feature>
<feature type="domain" description="Toprim" evidence="1">
    <location>
        <begin position="80"/>
        <end position="175"/>
    </location>
</feature>
<feature type="zinc finger region" description="C4-type" evidence="1">
    <location>
        <begin position="57"/>
        <end position="72"/>
    </location>
</feature>